<name>S41A2_XENLA</name>
<gene>
    <name type="primary">slc41a2</name>
</gene>
<sequence>MTANTGEPYKRHSNESPVDRNINVNAIQSDKFLSLLLSMVPVVCQTGQEERLKKVNGLTPIGYGFNIRTDQHLEFHNLSEPNYLGNGLHCSSLCSTNYDFDGYDYCDGINASETDAMLQDSRSSADGDKDALVEGSKKQTKESSIAMALQILVPFLLAGFGTVSAGMVLDIVQHWDVFKNLTEVFILVPALLGLKGNLEMTLASRLSTAVNVGKMDSPIEKWNLIIGNLALKQVQATVVGFLAAVFAVILGWIPDGKYQLDHAILLCSSSVATAFIASLLQGIIMVGVIVGSKKTGINPDNVATPIAASFGDLITLAILAWISQGLYNCLGSYAFVSPLVGVFFLAMTPIWIVIASKHPATRTVLHSGWEPVITAMLISSIGGLILDTTVSDPNLVGIVVYTPVINGIGGNLVAIQASRISTYLHLYSIPGELPEDAKGCYHPCRTFCGTGVNNKSAQVLLSLVIPGHLIFLYTIYLMKSGHTSLTPIFVAVYLLAALLQVFALLWIADWMVHHIWRKGKDPDSFSIPYLTALGDLLGTALLAISFHILWIIGDRDGDVGD</sequence>
<dbReference type="EMBL" id="BC076819">
    <property type="protein sequence ID" value="AAH76819.1"/>
    <property type="molecule type" value="mRNA"/>
</dbReference>
<dbReference type="RefSeq" id="NP_001086569.1">
    <property type="nucleotide sequence ID" value="NM_001093100.1"/>
</dbReference>
<dbReference type="RefSeq" id="XP_018106495.1">
    <property type="nucleotide sequence ID" value="XM_018251006.1"/>
</dbReference>
<dbReference type="DNASU" id="446404"/>
<dbReference type="GeneID" id="446404"/>
<dbReference type="KEGG" id="xla:446404"/>
<dbReference type="AGR" id="Xenbase:XB-GENE-955992"/>
<dbReference type="CTD" id="446404"/>
<dbReference type="Xenbase" id="XB-GENE-955992">
    <property type="gene designation" value="slc41a2.L"/>
</dbReference>
<dbReference type="OMA" id="CEFSAND"/>
<dbReference type="OrthoDB" id="5791097at2759"/>
<dbReference type="Proteomes" id="UP000186698">
    <property type="component" value="Chromosome 3L"/>
</dbReference>
<dbReference type="Bgee" id="446404">
    <property type="expression patterns" value="Expressed in liver and 19 other cell types or tissues"/>
</dbReference>
<dbReference type="GO" id="GO:0005886">
    <property type="term" value="C:plasma membrane"/>
    <property type="evidence" value="ECO:0000318"/>
    <property type="project" value="GO_Central"/>
</dbReference>
<dbReference type="GO" id="GO:0008324">
    <property type="term" value="F:monoatomic cation transmembrane transporter activity"/>
    <property type="evidence" value="ECO:0007669"/>
    <property type="project" value="InterPro"/>
</dbReference>
<dbReference type="GO" id="GO:0006824">
    <property type="term" value="P:cobalt ion transport"/>
    <property type="evidence" value="ECO:0000250"/>
    <property type="project" value="UniProtKB"/>
</dbReference>
<dbReference type="GO" id="GO:0006826">
    <property type="term" value="P:iron ion transport"/>
    <property type="evidence" value="ECO:0000250"/>
    <property type="project" value="UniProtKB"/>
</dbReference>
<dbReference type="GO" id="GO:0015693">
    <property type="term" value="P:magnesium ion transport"/>
    <property type="evidence" value="ECO:0000250"/>
    <property type="project" value="UniProtKB"/>
</dbReference>
<dbReference type="GO" id="GO:0006828">
    <property type="term" value="P:manganese ion transport"/>
    <property type="evidence" value="ECO:0000250"/>
    <property type="project" value="UniProtKB"/>
</dbReference>
<dbReference type="GO" id="GO:0015675">
    <property type="term" value="P:nickel cation transport"/>
    <property type="evidence" value="ECO:0000250"/>
    <property type="project" value="UniProtKB"/>
</dbReference>
<dbReference type="FunFam" id="1.10.357.20:FF:000001">
    <property type="entry name" value="Solute carrier family 41 member 2"/>
    <property type="match status" value="1"/>
</dbReference>
<dbReference type="FunFam" id="1.10.357.20:FF:000002">
    <property type="entry name" value="Solute carrier family 41, member 2"/>
    <property type="match status" value="1"/>
</dbReference>
<dbReference type="Gene3D" id="1.10.357.20">
    <property type="entry name" value="SLC41 divalent cation transporters, integral membrane domain"/>
    <property type="match status" value="2"/>
</dbReference>
<dbReference type="InterPro" id="IPR006667">
    <property type="entry name" value="SLC41_membr_dom"/>
</dbReference>
<dbReference type="InterPro" id="IPR036739">
    <property type="entry name" value="SLC41_membr_dom_sf"/>
</dbReference>
<dbReference type="InterPro" id="IPR045349">
    <property type="entry name" value="SLC41A1-3"/>
</dbReference>
<dbReference type="PANTHER" id="PTHR16228">
    <property type="entry name" value="DIVALENT CATION TRANSPORTER SOLUTE CARRIER FAMILY 41"/>
    <property type="match status" value="1"/>
</dbReference>
<dbReference type="PANTHER" id="PTHR16228:SF25">
    <property type="entry name" value="SOLUTE CARRIER FAMILY 41 MEMBER 2"/>
    <property type="match status" value="1"/>
</dbReference>
<dbReference type="Pfam" id="PF01769">
    <property type="entry name" value="MgtE"/>
    <property type="match status" value="2"/>
</dbReference>
<dbReference type="SUPFAM" id="SSF161093">
    <property type="entry name" value="MgtE membrane domain-like"/>
    <property type="match status" value="2"/>
</dbReference>
<feature type="chain" id="PRO_0000295044" description="Solute carrier family 41 member 2">
    <location>
        <begin position="1"/>
        <end position="561"/>
    </location>
</feature>
<feature type="topological domain" description="Extracellular" evidence="3">
    <location>
        <begin position="1"/>
        <end position="150"/>
    </location>
</feature>
<feature type="transmembrane region" description="Helical" evidence="3">
    <location>
        <begin position="151"/>
        <end position="171"/>
    </location>
</feature>
<feature type="topological domain" description="Cytoplasmic" evidence="2">
    <location>
        <begin position="172"/>
        <end position="183"/>
    </location>
</feature>
<feature type="transmembrane region" description="Helical" evidence="3">
    <location>
        <begin position="184"/>
        <end position="204"/>
    </location>
</feature>
<feature type="topological domain" description="Extracellular" evidence="2">
    <location>
        <begin position="205"/>
        <end position="233"/>
    </location>
</feature>
<feature type="transmembrane region" description="Helical" evidence="3">
    <location>
        <begin position="234"/>
        <end position="254"/>
    </location>
</feature>
<feature type="topological domain" description="Cytoplasmic" evidence="2">
    <location>
        <begin position="255"/>
        <end position="270"/>
    </location>
</feature>
<feature type="transmembrane region" description="Helical" evidence="3">
    <location>
        <begin position="271"/>
        <end position="291"/>
    </location>
</feature>
<feature type="topological domain" description="Extracellular" evidence="2">
    <location>
        <begin position="292"/>
        <end position="301"/>
    </location>
</feature>
<feature type="transmembrane region" description="Helical" evidence="3">
    <location>
        <begin position="302"/>
        <end position="322"/>
    </location>
</feature>
<feature type="topological domain" description="Cytoplasmic" evidence="2">
    <location>
        <begin position="323"/>
        <end position="333"/>
    </location>
</feature>
<feature type="transmembrane region" description="Helical" evidence="3">
    <location>
        <begin position="334"/>
        <end position="354"/>
    </location>
</feature>
<feature type="topological domain" description="Extracellular" evidence="2">
    <location>
        <begin position="355"/>
        <end position="364"/>
    </location>
</feature>
<feature type="transmembrane region" description="Helical" evidence="3">
    <location>
        <begin position="365"/>
        <end position="385"/>
    </location>
</feature>
<feature type="topological domain" description="Cytoplasmic" evidence="2">
    <location>
        <begin position="386"/>
        <end position="394"/>
    </location>
</feature>
<feature type="transmembrane region" description="Helical" evidence="3">
    <location>
        <begin position="395"/>
        <end position="415"/>
    </location>
</feature>
<feature type="topological domain" description="Extracellular" evidence="2">
    <location>
        <begin position="416"/>
        <end position="457"/>
    </location>
</feature>
<feature type="transmembrane region" description="Helical" evidence="3">
    <location>
        <begin position="458"/>
        <end position="478"/>
    </location>
</feature>
<feature type="topological domain" description="Cytoplasmic" evidence="2">
    <location>
        <begin position="479"/>
        <end position="487"/>
    </location>
</feature>
<feature type="transmembrane region" description="Helical" evidence="3">
    <location>
        <begin position="488"/>
        <end position="508"/>
    </location>
</feature>
<feature type="topological domain" description="Extracellular" evidence="2">
    <location>
        <begin position="509"/>
        <end position="531"/>
    </location>
</feature>
<feature type="transmembrane region" description="Helical" evidence="3">
    <location>
        <begin position="532"/>
        <end position="552"/>
    </location>
</feature>
<feature type="topological domain" description="Cytoplasmic" evidence="2">
    <location>
        <begin position="553"/>
        <end position="561"/>
    </location>
</feature>
<organism>
    <name type="scientific">Xenopus laevis</name>
    <name type="common">African clawed frog</name>
    <dbReference type="NCBI Taxonomy" id="8355"/>
    <lineage>
        <taxon>Eukaryota</taxon>
        <taxon>Metazoa</taxon>
        <taxon>Chordata</taxon>
        <taxon>Craniata</taxon>
        <taxon>Vertebrata</taxon>
        <taxon>Euteleostomi</taxon>
        <taxon>Amphibia</taxon>
        <taxon>Batrachia</taxon>
        <taxon>Anura</taxon>
        <taxon>Pipoidea</taxon>
        <taxon>Pipidae</taxon>
        <taxon>Xenopodinae</taxon>
        <taxon>Xenopus</taxon>
        <taxon>Xenopus</taxon>
    </lineage>
</organism>
<protein>
    <recommendedName>
        <fullName>Solute carrier family 41 member 2</fullName>
    </recommendedName>
</protein>
<reference key="1">
    <citation type="submission" date="2004-07" db="EMBL/GenBank/DDBJ databases">
        <authorList>
            <consortium name="NIH - Xenopus Gene Collection (XGC) project"/>
        </authorList>
    </citation>
    <scope>NUCLEOTIDE SEQUENCE [LARGE SCALE MRNA]</scope>
    <source>
        <tissue>Oocyte</tissue>
    </source>
</reference>
<accession>Q6DFC0</accession>
<evidence type="ECO:0000250" key="1">
    <source>
        <dbReference type="UniProtKB" id="Q8BYR8"/>
    </source>
</evidence>
<evidence type="ECO:0000250" key="2">
    <source>
        <dbReference type="UniProtKB" id="Q96JW4"/>
    </source>
</evidence>
<evidence type="ECO:0000255" key="3"/>
<evidence type="ECO:0000305" key="4"/>
<keyword id="KW-1003">Cell membrane</keyword>
<keyword id="KW-0406">Ion transport</keyword>
<keyword id="KW-0460">Magnesium</keyword>
<keyword id="KW-0472">Membrane</keyword>
<keyword id="KW-1185">Reference proteome</keyword>
<keyword id="KW-0677">Repeat</keyword>
<keyword id="KW-0812">Transmembrane</keyword>
<keyword id="KW-1133">Transmembrane helix</keyword>
<keyword id="KW-0813">Transport</keyword>
<comment type="function">
    <text evidence="1">Acts as a plasma-membrane magnesium transporter. Can also mediate the transport of other divalent metal cations in an order of Ba(2+) &gt; Ni(2+) &gt; Co(2+) &gt; Fe(2+) &gt; Mn(2+).</text>
</comment>
<comment type="catalytic activity">
    <reaction evidence="1">
        <text>Mg(2+)(in) = Mg(2+)(out)</text>
        <dbReference type="Rhea" id="RHEA:29827"/>
        <dbReference type="ChEBI" id="CHEBI:18420"/>
    </reaction>
</comment>
<comment type="catalytic activity">
    <reaction evidence="1">
        <text>Mn(2+)(in) = Mn(2+)(out)</text>
        <dbReference type="Rhea" id="RHEA:28699"/>
        <dbReference type="ChEBI" id="CHEBI:29035"/>
    </reaction>
</comment>
<comment type="catalytic activity">
    <reaction evidence="1">
        <text>Co(2+)(in) = Co(2+)(out)</text>
        <dbReference type="Rhea" id="RHEA:28578"/>
        <dbReference type="ChEBI" id="CHEBI:48828"/>
    </reaction>
</comment>
<comment type="catalytic activity">
    <reaction evidence="1">
        <text>Ni(2+)(in) = Ni(2+)(out)</text>
        <dbReference type="Rhea" id="RHEA:29831"/>
        <dbReference type="ChEBI" id="CHEBI:49786"/>
    </reaction>
</comment>
<comment type="catalytic activity">
    <reaction evidence="1">
        <text>Fe(2+)(in) = Fe(2+)(out)</text>
        <dbReference type="Rhea" id="RHEA:28486"/>
        <dbReference type="ChEBI" id="CHEBI:29033"/>
    </reaction>
</comment>
<comment type="subcellular location">
    <subcellularLocation>
        <location evidence="2">Cell membrane</location>
        <topology evidence="3">Multi-pass membrane protein</topology>
    </subcellularLocation>
</comment>
<comment type="similarity">
    <text evidence="4">Belongs to the SLC41A transporter family.</text>
</comment>
<proteinExistence type="evidence at transcript level"/>